<dbReference type="EC" id="6.1.1.17" evidence="1"/>
<dbReference type="EMBL" id="AE000511">
    <property type="protein sequence ID" value="AAD07544.1"/>
    <property type="molecule type" value="Genomic_DNA"/>
</dbReference>
<dbReference type="EMBL" id="AC000108">
    <property type="status" value="NOT_ANNOTATED_CDS"/>
    <property type="molecule type" value="Genomic_DNA"/>
</dbReference>
<dbReference type="PIR" id="D64579">
    <property type="entry name" value="D64579"/>
</dbReference>
<dbReference type="RefSeq" id="NP_207274.1">
    <property type="nucleotide sequence ID" value="NC_000915.1"/>
</dbReference>
<dbReference type="SMR" id="P96551"/>
<dbReference type="DIP" id="DIP-3351N"/>
<dbReference type="FunCoup" id="P96551">
    <property type="interactions" value="400"/>
</dbReference>
<dbReference type="IntAct" id="P96551">
    <property type="interactions" value="2"/>
</dbReference>
<dbReference type="MINT" id="P96551"/>
<dbReference type="STRING" id="85962.HP_0476"/>
<dbReference type="PaxDb" id="85962-C694_02440"/>
<dbReference type="EnsemblBacteria" id="AAD07544">
    <property type="protein sequence ID" value="AAD07544"/>
    <property type="gene ID" value="HP_0476"/>
</dbReference>
<dbReference type="KEGG" id="heo:C694_02440"/>
<dbReference type="KEGG" id="hpy:HP_0476"/>
<dbReference type="PATRIC" id="fig|85962.47.peg.511"/>
<dbReference type="eggNOG" id="COG0008">
    <property type="taxonomic scope" value="Bacteria"/>
</dbReference>
<dbReference type="InParanoid" id="P96551"/>
<dbReference type="OrthoDB" id="9807503at2"/>
<dbReference type="PhylomeDB" id="P96551"/>
<dbReference type="Proteomes" id="UP000000429">
    <property type="component" value="Chromosome"/>
</dbReference>
<dbReference type="GO" id="GO:0005829">
    <property type="term" value="C:cytosol"/>
    <property type="evidence" value="ECO:0000318"/>
    <property type="project" value="GO_Central"/>
</dbReference>
<dbReference type="GO" id="GO:0005524">
    <property type="term" value="F:ATP binding"/>
    <property type="evidence" value="ECO:0007669"/>
    <property type="project" value="UniProtKB-UniRule"/>
</dbReference>
<dbReference type="GO" id="GO:0004818">
    <property type="term" value="F:glutamate-tRNA ligase activity"/>
    <property type="evidence" value="ECO:0000318"/>
    <property type="project" value="GO_Central"/>
</dbReference>
<dbReference type="GO" id="GO:0000049">
    <property type="term" value="F:tRNA binding"/>
    <property type="evidence" value="ECO:0007669"/>
    <property type="project" value="InterPro"/>
</dbReference>
<dbReference type="GO" id="GO:0008270">
    <property type="term" value="F:zinc ion binding"/>
    <property type="evidence" value="ECO:0007669"/>
    <property type="project" value="InterPro"/>
</dbReference>
<dbReference type="GO" id="GO:0006424">
    <property type="term" value="P:glutamyl-tRNA aminoacylation"/>
    <property type="evidence" value="ECO:0000318"/>
    <property type="project" value="GO_Central"/>
</dbReference>
<dbReference type="CDD" id="cd00808">
    <property type="entry name" value="GluRS_core"/>
    <property type="match status" value="1"/>
</dbReference>
<dbReference type="FunFam" id="3.40.50.620:FF:000288">
    <property type="entry name" value="Glutamate--tRNA ligase 1"/>
    <property type="match status" value="1"/>
</dbReference>
<dbReference type="Gene3D" id="1.10.10.350">
    <property type="match status" value="1"/>
</dbReference>
<dbReference type="Gene3D" id="3.40.50.620">
    <property type="entry name" value="HUPs"/>
    <property type="match status" value="1"/>
</dbReference>
<dbReference type="HAMAP" id="MF_00022">
    <property type="entry name" value="Glu_tRNA_synth_type1"/>
    <property type="match status" value="1"/>
</dbReference>
<dbReference type="InterPro" id="IPR045462">
    <property type="entry name" value="aa-tRNA-synth_I_cd-bd"/>
</dbReference>
<dbReference type="InterPro" id="IPR020751">
    <property type="entry name" value="aa-tRNA-synth_I_codon-bd_sub2"/>
</dbReference>
<dbReference type="InterPro" id="IPR001412">
    <property type="entry name" value="aa-tRNA-synth_I_CS"/>
</dbReference>
<dbReference type="InterPro" id="IPR008925">
    <property type="entry name" value="aa_tRNA-synth_I_cd-bd_sf"/>
</dbReference>
<dbReference type="InterPro" id="IPR004527">
    <property type="entry name" value="Glu-tRNA-ligase_bac/mito"/>
</dbReference>
<dbReference type="InterPro" id="IPR000924">
    <property type="entry name" value="Glu/Gln-tRNA-synth"/>
</dbReference>
<dbReference type="InterPro" id="IPR020058">
    <property type="entry name" value="Glu/Gln-tRNA-synth_Ib_cat-dom"/>
</dbReference>
<dbReference type="InterPro" id="IPR049940">
    <property type="entry name" value="GluQ/Sye"/>
</dbReference>
<dbReference type="InterPro" id="IPR033910">
    <property type="entry name" value="GluRS_core"/>
</dbReference>
<dbReference type="InterPro" id="IPR014729">
    <property type="entry name" value="Rossmann-like_a/b/a_fold"/>
</dbReference>
<dbReference type="NCBIfam" id="TIGR00464">
    <property type="entry name" value="gltX_bact"/>
    <property type="match status" value="1"/>
</dbReference>
<dbReference type="NCBIfam" id="NF004314">
    <property type="entry name" value="PRK05710.1-3"/>
    <property type="match status" value="1"/>
</dbReference>
<dbReference type="PANTHER" id="PTHR43311">
    <property type="entry name" value="GLUTAMATE--TRNA LIGASE"/>
    <property type="match status" value="1"/>
</dbReference>
<dbReference type="PANTHER" id="PTHR43311:SF2">
    <property type="entry name" value="GLUTAMATE--TRNA LIGASE, MITOCHONDRIAL-RELATED"/>
    <property type="match status" value="1"/>
</dbReference>
<dbReference type="Pfam" id="PF19269">
    <property type="entry name" value="Anticodon_2"/>
    <property type="match status" value="1"/>
</dbReference>
<dbReference type="Pfam" id="PF00749">
    <property type="entry name" value="tRNA-synt_1c"/>
    <property type="match status" value="1"/>
</dbReference>
<dbReference type="PRINTS" id="PR00987">
    <property type="entry name" value="TRNASYNTHGLU"/>
</dbReference>
<dbReference type="SUPFAM" id="SSF48163">
    <property type="entry name" value="An anticodon-binding domain of class I aminoacyl-tRNA synthetases"/>
    <property type="match status" value="1"/>
</dbReference>
<dbReference type="SUPFAM" id="SSF52374">
    <property type="entry name" value="Nucleotidylyl transferase"/>
    <property type="match status" value="1"/>
</dbReference>
<dbReference type="PROSITE" id="PS00178">
    <property type="entry name" value="AA_TRNA_LIGASE_I"/>
    <property type="match status" value="1"/>
</dbReference>
<feature type="chain" id="PRO_0000119576" description="Glutamate--tRNA ligase 1">
    <location>
        <begin position="1"/>
        <end position="463"/>
    </location>
</feature>
<feature type="short sequence motif" description="'HIGH' region" evidence="1">
    <location>
        <begin position="10"/>
        <end position="20"/>
    </location>
</feature>
<feature type="short sequence motif" description="'KMSKS' region" evidence="1">
    <location>
        <begin position="238"/>
        <end position="242"/>
    </location>
</feature>
<feature type="binding site" evidence="1">
    <location>
        <position position="241"/>
    </location>
    <ligand>
        <name>ATP</name>
        <dbReference type="ChEBI" id="CHEBI:30616"/>
    </ligand>
</feature>
<feature type="sequence conflict" description="In Ref. 2." evidence="2" ref="2">
    <original>V</original>
    <variation>I</variation>
    <location>
        <position position="369"/>
    </location>
</feature>
<feature type="sequence conflict" description="In Ref. 2." evidence="2" ref="2">
    <original>A</original>
    <variation>V</variation>
    <location>
        <position position="398"/>
    </location>
</feature>
<feature type="sequence conflict" description="In Ref. 2." evidence="2" ref="2">
    <original>R</original>
    <variation>H</variation>
    <location>
        <position position="411"/>
    </location>
</feature>
<feature type="sequence conflict" description="In Ref. 2." evidence="2" ref="2">
    <original>V</original>
    <variation>L</variation>
    <location>
        <position position="454"/>
    </location>
</feature>
<gene>
    <name evidence="1" type="primary">gltX1</name>
    <name type="ordered locus">HP_0476</name>
</gene>
<proteinExistence type="inferred from homology"/>
<comment type="function">
    <text evidence="1">Catalyzes the attachment of glutamate to tRNA(Glu) in a two-step reaction: glutamate is first activated by ATP to form Glu-AMP and then transferred to the acceptor end of tRNA(Glu).</text>
</comment>
<comment type="catalytic activity">
    <reaction evidence="1">
        <text>tRNA(Glu) + L-glutamate + ATP = L-glutamyl-tRNA(Glu) + AMP + diphosphate</text>
        <dbReference type="Rhea" id="RHEA:23540"/>
        <dbReference type="Rhea" id="RHEA-COMP:9663"/>
        <dbReference type="Rhea" id="RHEA-COMP:9680"/>
        <dbReference type="ChEBI" id="CHEBI:29985"/>
        <dbReference type="ChEBI" id="CHEBI:30616"/>
        <dbReference type="ChEBI" id="CHEBI:33019"/>
        <dbReference type="ChEBI" id="CHEBI:78442"/>
        <dbReference type="ChEBI" id="CHEBI:78520"/>
        <dbReference type="ChEBI" id="CHEBI:456215"/>
        <dbReference type="EC" id="6.1.1.17"/>
    </reaction>
</comment>
<comment type="subunit">
    <text evidence="1">Monomer.</text>
</comment>
<comment type="subcellular location">
    <subcellularLocation>
        <location evidence="1">Cytoplasm</location>
    </subcellularLocation>
</comment>
<comment type="similarity">
    <text evidence="1">Belongs to the class-I aminoacyl-tRNA synthetase family. Glutamate--tRNA ligase type 1 subfamily.</text>
</comment>
<organism>
    <name type="scientific">Helicobacter pylori (strain ATCC 700392 / 26695)</name>
    <name type="common">Campylobacter pylori</name>
    <dbReference type="NCBI Taxonomy" id="85962"/>
    <lineage>
        <taxon>Bacteria</taxon>
        <taxon>Pseudomonadati</taxon>
        <taxon>Campylobacterota</taxon>
        <taxon>Epsilonproteobacteria</taxon>
        <taxon>Campylobacterales</taxon>
        <taxon>Helicobacteraceae</taxon>
        <taxon>Helicobacter</taxon>
    </lineage>
</organism>
<protein>
    <recommendedName>
        <fullName evidence="1">Glutamate--tRNA ligase 1</fullName>
        <ecNumber evidence="1">6.1.1.17</ecNumber>
    </recommendedName>
    <alternativeName>
        <fullName evidence="1">Glutamyl-tRNA synthetase 1</fullName>
        <shortName evidence="1">GluRS 1</shortName>
    </alternativeName>
</protein>
<evidence type="ECO:0000255" key="1">
    <source>
        <dbReference type="HAMAP-Rule" id="MF_00022"/>
    </source>
</evidence>
<evidence type="ECO:0000305" key="2"/>
<reference key="1">
    <citation type="journal article" date="1997" name="Nature">
        <title>The complete genome sequence of the gastric pathogen Helicobacter pylori.</title>
        <authorList>
            <person name="Tomb J.-F."/>
            <person name="White O."/>
            <person name="Kerlavage A.R."/>
            <person name="Clayton R.A."/>
            <person name="Sutton G.G."/>
            <person name="Fleischmann R.D."/>
            <person name="Ketchum K.A."/>
            <person name="Klenk H.-P."/>
            <person name="Gill S.R."/>
            <person name="Dougherty B.A."/>
            <person name="Nelson K.E."/>
            <person name="Quackenbush J."/>
            <person name="Zhou L."/>
            <person name="Kirkness E.F."/>
            <person name="Peterson S.N."/>
            <person name="Loftus B.J."/>
            <person name="Richardson D.L."/>
            <person name="Dodson R.J."/>
            <person name="Khalak H.G."/>
            <person name="Glodek A."/>
            <person name="McKenney K."/>
            <person name="FitzGerald L.M."/>
            <person name="Lee N."/>
            <person name="Adams M.D."/>
            <person name="Hickey E.K."/>
            <person name="Berg D.E."/>
            <person name="Gocayne J.D."/>
            <person name="Utterback T.R."/>
            <person name="Peterson J.D."/>
            <person name="Kelley J.M."/>
            <person name="Cotton M.D."/>
            <person name="Weidman J.F."/>
            <person name="Fujii C."/>
            <person name="Bowman C."/>
            <person name="Watthey L."/>
            <person name="Wallin E."/>
            <person name="Hayes W.S."/>
            <person name="Borodovsky M."/>
            <person name="Karp P.D."/>
            <person name="Smith H.O."/>
            <person name="Fraser C.M."/>
            <person name="Venter J.C."/>
        </authorList>
    </citation>
    <scope>NUCLEOTIDE SEQUENCE [LARGE SCALE GENOMIC DNA]</scope>
    <source>
        <strain>ATCC 700392 / 26695</strain>
    </source>
</reference>
<reference key="2">
    <citation type="submission" date="1997-01" db="EMBL/GenBank/DDBJ databases">
        <authorList>
            <person name="Akopyants N.S."/>
            <person name="Kersulyte D."/>
            <person name="Clifton S.W."/>
            <person name="Youree B.E."/>
            <person name="Reece C.A."/>
            <person name="Roe B.A."/>
            <person name="Berg D.E."/>
        </authorList>
    </citation>
    <scope>NUCLEOTIDE SEQUENCE [GENOMIC DNA] OF 351-463</scope>
</reference>
<sequence>MSLIVTRFAPSPTGYLHIGGLRTAIFNYLFARANQGKFFLRIEDTDLSRNSIEAANAIIEAFKWVGLEYDGEILYQSKRFEIYKEYIQKLLDEDKAYYCYMSKEELDALREEQKARKETPRYDNRYRDFKGTPPKGIEPVVRIKVPQNEVIGFNDGVKGEVKVNTNELDDFIIARSDGTPTYNFVVTIDDALMGITDVIRGDDHLSNTPKQIVLYKALNFKIPNFFHVPMILNEEGQKLSKRHGATNVMDYQEMGYLKEALVNFLARLGWSYQDKEVFSMQELLELFDPKDLNSSPSCFSWHKLNWLNAHYLKNQSVQELLKLLKPFSFSDLSHLNPTQLDRLLDALKERSQTLKELALKIDEVLIAPVEYEEKVFKKLNQALVMPLLEKFKLELNKANFNDESALENAMRQIIEEEKIKAGSFMQPLRLALLGKGGGIGLKEALFILGKTESVKRIEDFLKN</sequence>
<accession>P96551</accession>
<keyword id="KW-0030">Aminoacyl-tRNA synthetase</keyword>
<keyword id="KW-0067">ATP-binding</keyword>
<keyword id="KW-0963">Cytoplasm</keyword>
<keyword id="KW-0436">Ligase</keyword>
<keyword id="KW-0547">Nucleotide-binding</keyword>
<keyword id="KW-0648">Protein biosynthesis</keyword>
<keyword id="KW-1185">Reference proteome</keyword>
<name>SYE1_HELPY</name>